<feature type="chain" id="PRO_0000372098" description="Na(+)/H(+) antiporter subunit A1">
    <location>
        <begin position="1"/>
        <end position="801"/>
    </location>
</feature>
<feature type="transmembrane region" description="Helical" evidence="2">
    <location>
        <begin position="1"/>
        <end position="21"/>
    </location>
</feature>
<feature type="transmembrane region" description="Helical" evidence="2">
    <location>
        <begin position="28"/>
        <end position="48"/>
    </location>
</feature>
<feature type="transmembrane region" description="Helical" evidence="2">
    <location>
        <begin position="79"/>
        <end position="99"/>
    </location>
</feature>
<feature type="transmembrane region" description="Helical" evidence="2">
    <location>
        <begin position="117"/>
        <end position="137"/>
    </location>
</feature>
<feature type="transmembrane region" description="Helical" evidence="2">
    <location>
        <begin position="166"/>
        <end position="186"/>
    </location>
</feature>
<feature type="transmembrane region" description="Helical" evidence="2">
    <location>
        <begin position="206"/>
        <end position="226"/>
    </location>
</feature>
<feature type="transmembrane region" description="Helical" evidence="2">
    <location>
        <begin position="265"/>
        <end position="285"/>
    </location>
</feature>
<feature type="transmembrane region" description="Helical" evidence="2">
    <location>
        <begin position="300"/>
        <end position="320"/>
    </location>
</feature>
<feature type="transmembrane region" description="Helical" evidence="2">
    <location>
        <begin position="337"/>
        <end position="357"/>
    </location>
</feature>
<feature type="transmembrane region" description="Helical" evidence="2">
    <location>
        <begin position="373"/>
        <end position="393"/>
    </location>
</feature>
<feature type="transmembrane region" description="Helical" evidence="2">
    <location>
        <begin position="427"/>
        <end position="447"/>
    </location>
</feature>
<feature type="transmembrane region" description="Helical" evidence="2">
    <location>
        <begin position="472"/>
        <end position="492"/>
    </location>
</feature>
<feature type="transmembrane region" description="Helical" evidence="2">
    <location>
        <begin position="522"/>
        <end position="542"/>
    </location>
</feature>
<feature type="transmembrane region" description="Helical" evidence="2">
    <location>
        <begin position="591"/>
        <end position="611"/>
    </location>
</feature>
<feature type="transmembrane region" description="Helical" evidence="2">
    <location>
        <begin position="623"/>
        <end position="643"/>
    </location>
</feature>
<feature type="transmembrane region" description="Helical" evidence="2">
    <location>
        <begin position="646"/>
        <end position="666"/>
    </location>
</feature>
<feature type="transmembrane region" description="Helical" evidence="2">
    <location>
        <begin position="671"/>
        <end position="691"/>
    </location>
</feature>
<feature type="transmembrane region" description="Helical" evidence="2">
    <location>
        <begin position="707"/>
        <end position="727"/>
    </location>
</feature>
<feature type="transmembrane region" description="Helical" evidence="2">
    <location>
        <begin position="764"/>
        <end position="784"/>
    </location>
</feature>
<reference key="1">
    <citation type="journal article" date="2008" name="J. Bacteriol.">
        <title>Genome sequence of Staphylococcus aureus strain Newman and comparative analysis of staphylococcal genomes: polymorphism and evolution of two major pathogenicity islands.</title>
        <authorList>
            <person name="Baba T."/>
            <person name="Bae T."/>
            <person name="Schneewind O."/>
            <person name="Takeuchi F."/>
            <person name="Hiramatsu K."/>
        </authorList>
    </citation>
    <scope>NUCLEOTIDE SEQUENCE [LARGE SCALE GENOMIC DNA]</scope>
    <source>
        <strain>Newman</strain>
    </source>
</reference>
<organism>
    <name type="scientific">Staphylococcus aureus (strain Newman)</name>
    <dbReference type="NCBI Taxonomy" id="426430"/>
    <lineage>
        <taxon>Bacteria</taxon>
        <taxon>Bacillati</taxon>
        <taxon>Bacillota</taxon>
        <taxon>Bacilli</taxon>
        <taxon>Bacillales</taxon>
        <taxon>Staphylococcaceae</taxon>
        <taxon>Staphylococcus</taxon>
    </lineage>
</organism>
<keyword id="KW-0050">Antiport</keyword>
<keyword id="KW-1003">Cell membrane</keyword>
<keyword id="KW-0375">Hydrogen ion transport</keyword>
<keyword id="KW-0406">Ion transport</keyword>
<keyword id="KW-0472">Membrane</keyword>
<keyword id="KW-0915">Sodium</keyword>
<keyword id="KW-0739">Sodium transport</keyword>
<keyword id="KW-0812">Transmembrane</keyword>
<keyword id="KW-1133">Transmembrane helix</keyword>
<keyword id="KW-0813">Transport</keyword>
<gene>
    <name type="primary">mnhA1</name>
    <name type="ordered locus">NWMN_0822</name>
</gene>
<evidence type="ECO:0000250" key="1"/>
<evidence type="ECO:0000255" key="2"/>
<evidence type="ECO:0000305" key="3"/>
<sequence>MSLLHIAVILPLIFALIIPILYRFFKRIHLGWFVLPVPIVIFIYMLTLIKTTMSGNTVMKTLNWMPHFGMNFDLYLDGLGLLFSLLISGIGSLVVLYSIGYLSKSEQLGNFYCYLLLFMGAMLGVVLSDNVIILYLFWELTSFSSFLLISFWRERQASIYGAQKSLIITVFGGLSLLGGIILLAIPTQSFSIQYMIQHASEIQNSPFFIFAMILIMIGAFTKSAQFPFYIWLPDAMEAPTPVSAYLHSATMVKAGLYLIARMTPIFAASQGWVWTVTLVGLITLFWASLNATKQQDLKGILAFSTVSQLGMIMAMLGIGAISYHYQGDDSKIYAAAFTAAIFHLINHATFKGALFMITGAVDHSTGTRDVKKLGGLLTIMPISFTITVITALSMAGVPPFNGFLSKESFLETTFTASQANLFSVDTLGYLFPIIGIVGSVFTFVYSIKFIMHIFFGQYKPEQLPKKAHEVSILMLLSPAILATLVIVFGLFPGILTNSIIEPATSSINHTVIDDVEFHMFHGLTPAFLSTLVIYILGILLIVTFSYWVKLLQRQPGKLTFNYWYNRSANVIPNYSEKMTNSYVTDYSRNNLVIIFGALILLTFVTIFSVPFNINFKDVSPIRIFEVCIVILLLSAAFLILFAKSRLFSIIMLSAVGYAVSVLFIFFKAPDLALTQFVVESISTALFLLCFYHLPNLNRYNEKRSFQLTNALIAGGVGLSVIIIGLIAYGNRHFESISKFYQEHVYDLAHGKNMVNVILVDFRGMDTLFESSVLGIAGLAVYTMIKLRKKRQTQGNEVKNHE</sequence>
<comment type="function">
    <text evidence="1">Mnh complex is a Na(+)/H(+) antiporter involved in Na(+) excretion.</text>
</comment>
<comment type="subunit">
    <text evidence="1">May form a heterooligomeric complex that consists of seven subunits: mnhA1, mnhB1, mnhC1, mnhD1, mnhE1, mnhF1 and mnhG1.</text>
</comment>
<comment type="subcellular location">
    <subcellularLocation>
        <location evidence="3">Cell membrane</location>
        <topology evidence="3">Multi-pass membrane protein</topology>
    </subcellularLocation>
</comment>
<comment type="similarity">
    <text evidence="3">Belongs to the CPA3 antiporters (TC 2.A.63) subunit A family.</text>
</comment>
<accession>A6QFG2</accession>
<proteinExistence type="inferred from homology"/>
<dbReference type="EMBL" id="AP009351">
    <property type="protein sequence ID" value="BAF67094.1"/>
    <property type="molecule type" value="Genomic_DNA"/>
</dbReference>
<dbReference type="RefSeq" id="WP_000054609.1">
    <property type="nucleotide sequence ID" value="NZ_JBBIAE010000002.1"/>
</dbReference>
<dbReference type="SMR" id="A6QFG2"/>
<dbReference type="KEGG" id="sae:NWMN_0822"/>
<dbReference type="HOGENOM" id="CLU_007100_2_1_9"/>
<dbReference type="PHI-base" id="PHI:7818"/>
<dbReference type="Proteomes" id="UP000006386">
    <property type="component" value="Chromosome"/>
</dbReference>
<dbReference type="GO" id="GO:0005886">
    <property type="term" value="C:plasma membrane"/>
    <property type="evidence" value="ECO:0007669"/>
    <property type="project" value="UniProtKB-SubCell"/>
</dbReference>
<dbReference type="GO" id="GO:0015297">
    <property type="term" value="F:antiporter activity"/>
    <property type="evidence" value="ECO:0007669"/>
    <property type="project" value="UniProtKB-KW"/>
</dbReference>
<dbReference type="GO" id="GO:1902600">
    <property type="term" value="P:proton transmembrane transport"/>
    <property type="evidence" value="ECO:0007669"/>
    <property type="project" value="UniProtKB-KW"/>
</dbReference>
<dbReference type="GO" id="GO:0006814">
    <property type="term" value="P:sodium ion transport"/>
    <property type="evidence" value="ECO:0007669"/>
    <property type="project" value="UniProtKB-KW"/>
</dbReference>
<dbReference type="InterPro" id="IPR050616">
    <property type="entry name" value="CPA3_Na-H_Antiporter_A"/>
</dbReference>
<dbReference type="InterPro" id="IPR005663">
    <property type="entry name" value="MrpA/MnhA1/PhaAB"/>
</dbReference>
<dbReference type="InterPro" id="IPR025383">
    <property type="entry name" value="MrpA_C/MbhD"/>
</dbReference>
<dbReference type="InterPro" id="IPR046806">
    <property type="entry name" value="MrpA_C/MbhE"/>
</dbReference>
<dbReference type="InterPro" id="IPR001750">
    <property type="entry name" value="ND/Mrp_TM"/>
</dbReference>
<dbReference type="InterPro" id="IPR001516">
    <property type="entry name" value="Proton_antipo_N"/>
</dbReference>
<dbReference type="NCBIfam" id="TIGR00940">
    <property type="entry name" value="2a6301s01"/>
    <property type="match status" value="1"/>
</dbReference>
<dbReference type="NCBIfam" id="NF009285">
    <property type="entry name" value="PRK12645.1"/>
    <property type="match status" value="1"/>
</dbReference>
<dbReference type="PANTHER" id="PTHR43373">
    <property type="entry name" value="NA(+)/H(+) ANTIPORTER SUBUNIT"/>
    <property type="match status" value="1"/>
</dbReference>
<dbReference type="PANTHER" id="PTHR43373:SF1">
    <property type="entry name" value="NA(+)_H(+) ANTIPORTER SUBUNIT A"/>
    <property type="match status" value="1"/>
</dbReference>
<dbReference type="Pfam" id="PF13244">
    <property type="entry name" value="MbhD"/>
    <property type="match status" value="1"/>
</dbReference>
<dbReference type="Pfam" id="PF20501">
    <property type="entry name" value="MbhE"/>
    <property type="match status" value="1"/>
</dbReference>
<dbReference type="Pfam" id="PF00361">
    <property type="entry name" value="Proton_antipo_M"/>
    <property type="match status" value="1"/>
</dbReference>
<dbReference type="Pfam" id="PF00662">
    <property type="entry name" value="Proton_antipo_N"/>
    <property type="match status" value="1"/>
</dbReference>
<dbReference type="PRINTS" id="PR01434">
    <property type="entry name" value="NADHDHGNASE5"/>
</dbReference>
<dbReference type="PRINTS" id="PR01435">
    <property type="entry name" value="NPOXDRDTASE5"/>
</dbReference>
<name>MNHA1_STAAE</name>
<protein>
    <recommendedName>
        <fullName>Na(+)/H(+) antiporter subunit A1</fullName>
    </recommendedName>
    <alternativeName>
        <fullName>Mnh complex subunit A1</fullName>
    </alternativeName>
</protein>